<evidence type="ECO:0000255" key="1">
    <source>
        <dbReference type="PROSITE-ProRule" id="PRU00238"/>
    </source>
</evidence>
<evidence type="ECO:0000269" key="2">
    <source>
    </source>
</evidence>
<evidence type="ECO:0000269" key="3">
    <source>
    </source>
</evidence>
<keyword id="KW-0007">Acetylation</keyword>
<keyword id="KW-0903">Direct protein sequencing</keyword>
<keyword id="KW-0349">Heme</keyword>
<keyword id="KW-0408">Iron</keyword>
<keyword id="KW-0479">Metal-binding</keyword>
<keyword id="KW-0561">Oxygen transport</keyword>
<keyword id="KW-0813">Transport</keyword>
<name>HBA_CATCL</name>
<organism>
    <name type="scientific">Catostomus clarkii</name>
    <name type="common">Desert sucker</name>
    <dbReference type="NCBI Taxonomy" id="7970"/>
    <lineage>
        <taxon>Eukaryota</taxon>
        <taxon>Metazoa</taxon>
        <taxon>Chordata</taxon>
        <taxon>Craniata</taxon>
        <taxon>Vertebrata</taxon>
        <taxon>Euteleostomi</taxon>
        <taxon>Actinopterygii</taxon>
        <taxon>Neopterygii</taxon>
        <taxon>Teleostei</taxon>
        <taxon>Ostariophysi</taxon>
        <taxon>Cypriniformes</taxon>
        <taxon>Catostomoidei</taxon>
        <taxon>Catostomidae</taxon>
        <taxon>Pantosteus</taxon>
    </lineage>
</organism>
<feature type="chain" id="PRO_0000052588" description="Hemoglobin subunit alpha">
    <location>
        <begin position="1"/>
        <end position="142"/>
    </location>
</feature>
<feature type="domain" description="Globin" evidence="1">
    <location>
        <begin position="1"/>
        <end position="142"/>
    </location>
</feature>
<feature type="binding site">
    <location>
        <position position="58"/>
    </location>
    <ligand>
        <name>O2</name>
        <dbReference type="ChEBI" id="CHEBI:15379"/>
    </ligand>
</feature>
<feature type="binding site">
    <location>
        <position position="88"/>
    </location>
    <ligand>
        <name>heme b</name>
        <dbReference type="ChEBI" id="CHEBI:60344"/>
    </ligand>
    <ligandPart>
        <name>Fe</name>
        <dbReference type="ChEBI" id="CHEBI:18248"/>
    </ligandPart>
</feature>
<feature type="modified residue" description="N-acetylserine" evidence="2">
    <location>
        <position position="1"/>
    </location>
</feature>
<sequence>SLSDKDKADVKIAWAKISPRADEIGAEALGRMLTVYPQTKTYFAHWADLSPGSGPVKHGKKVIMGAIGDAVTKFDDLLGGLASLSELHASKLRVDPSNFKILANCITVVIMFYLPGDFPPEVHASVDKFFQNLALALGQKYR</sequence>
<accession>P02017</accession>
<protein>
    <recommendedName>
        <fullName>Hemoglobin subunit alpha</fullName>
    </recommendedName>
    <alternativeName>
        <fullName>Alpha-globin</fullName>
    </alternativeName>
    <alternativeName>
        <fullName>Hemoglobin alpha chain</fullName>
    </alternativeName>
</protein>
<proteinExistence type="evidence at protein level"/>
<dbReference type="PIR" id="A92116">
    <property type="entry name" value="HACC1"/>
</dbReference>
<dbReference type="SMR" id="P02017"/>
<dbReference type="iPTMnet" id="P02017"/>
<dbReference type="GO" id="GO:0072562">
    <property type="term" value="C:blood microparticle"/>
    <property type="evidence" value="ECO:0007669"/>
    <property type="project" value="TreeGrafter"/>
</dbReference>
<dbReference type="GO" id="GO:0031838">
    <property type="term" value="C:haptoglobin-hemoglobin complex"/>
    <property type="evidence" value="ECO:0007669"/>
    <property type="project" value="TreeGrafter"/>
</dbReference>
<dbReference type="GO" id="GO:0005833">
    <property type="term" value="C:hemoglobin complex"/>
    <property type="evidence" value="ECO:0007669"/>
    <property type="project" value="InterPro"/>
</dbReference>
<dbReference type="GO" id="GO:0031720">
    <property type="term" value="F:haptoglobin binding"/>
    <property type="evidence" value="ECO:0007669"/>
    <property type="project" value="TreeGrafter"/>
</dbReference>
<dbReference type="GO" id="GO:0020037">
    <property type="term" value="F:heme binding"/>
    <property type="evidence" value="ECO:0007669"/>
    <property type="project" value="InterPro"/>
</dbReference>
<dbReference type="GO" id="GO:0046872">
    <property type="term" value="F:metal ion binding"/>
    <property type="evidence" value="ECO:0007669"/>
    <property type="project" value="UniProtKB-KW"/>
</dbReference>
<dbReference type="GO" id="GO:0043177">
    <property type="term" value="F:organic acid binding"/>
    <property type="evidence" value="ECO:0007669"/>
    <property type="project" value="TreeGrafter"/>
</dbReference>
<dbReference type="GO" id="GO:0019825">
    <property type="term" value="F:oxygen binding"/>
    <property type="evidence" value="ECO:0007669"/>
    <property type="project" value="InterPro"/>
</dbReference>
<dbReference type="GO" id="GO:0005344">
    <property type="term" value="F:oxygen carrier activity"/>
    <property type="evidence" value="ECO:0007669"/>
    <property type="project" value="UniProtKB-KW"/>
</dbReference>
<dbReference type="GO" id="GO:0004601">
    <property type="term" value="F:peroxidase activity"/>
    <property type="evidence" value="ECO:0007669"/>
    <property type="project" value="TreeGrafter"/>
</dbReference>
<dbReference type="GO" id="GO:0042744">
    <property type="term" value="P:hydrogen peroxide catabolic process"/>
    <property type="evidence" value="ECO:0007669"/>
    <property type="project" value="TreeGrafter"/>
</dbReference>
<dbReference type="CDD" id="cd08927">
    <property type="entry name" value="Hb-alpha-like"/>
    <property type="match status" value="1"/>
</dbReference>
<dbReference type="FunFam" id="1.10.490.10:FF:000002">
    <property type="entry name" value="Hemoglobin subunit alpha"/>
    <property type="match status" value="1"/>
</dbReference>
<dbReference type="Gene3D" id="1.10.490.10">
    <property type="entry name" value="Globins"/>
    <property type="match status" value="1"/>
</dbReference>
<dbReference type="InterPro" id="IPR000971">
    <property type="entry name" value="Globin"/>
</dbReference>
<dbReference type="InterPro" id="IPR009050">
    <property type="entry name" value="Globin-like_sf"/>
</dbReference>
<dbReference type="InterPro" id="IPR012292">
    <property type="entry name" value="Globin/Proto"/>
</dbReference>
<dbReference type="InterPro" id="IPR002338">
    <property type="entry name" value="Hemoglobin_a-typ"/>
</dbReference>
<dbReference type="InterPro" id="IPR050056">
    <property type="entry name" value="Hemoglobin_oxygen_transport"/>
</dbReference>
<dbReference type="PANTHER" id="PTHR11442:SF93">
    <property type="entry name" value="ALPHA GLOBIN-LIKE-RELATED"/>
    <property type="match status" value="1"/>
</dbReference>
<dbReference type="PANTHER" id="PTHR11442">
    <property type="entry name" value="HEMOGLOBIN FAMILY MEMBER"/>
    <property type="match status" value="1"/>
</dbReference>
<dbReference type="Pfam" id="PF00042">
    <property type="entry name" value="Globin"/>
    <property type="match status" value="1"/>
</dbReference>
<dbReference type="PRINTS" id="PR00612">
    <property type="entry name" value="ALPHAHAEM"/>
</dbReference>
<dbReference type="SUPFAM" id="SSF46458">
    <property type="entry name" value="Globin-like"/>
    <property type="match status" value="1"/>
</dbReference>
<dbReference type="PROSITE" id="PS01033">
    <property type="entry name" value="GLOBIN"/>
    <property type="match status" value="1"/>
</dbReference>
<comment type="function">
    <text>Involved in oxygen transport from gills to the various peripheral tissues.</text>
</comment>
<comment type="subunit">
    <text evidence="3">Heterotetramer of two alpha chains and two beta chains.</text>
</comment>
<comment type="tissue specificity">
    <text>Red blood cells.</text>
</comment>
<comment type="miscellaneous">
    <text>This fish has ten hemoglobins, 8 of which are anodal and 2 cathodal. The cathodal tetramers do not exhibit the Bohr effect, due to lack of the C-terminal His in the beta chains and to blocking of the alpha-amino group on the N-terminal residue of the alpha chains. The possession of both anodal and cathodal hemoglobins may be a physiological advantage for fish living in fast-moving water habitats.</text>
</comment>
<comment type="miscellaneous">
    <text>This fish possesses 6 types of hemoglobin chains, including a major alpha chain, a minor alpha chain, two major beta chains, and two minor beta chains.</text>
</comment>
<comment type="similarity">
    <text evidence="1">Belongs to the globin family.</text>
</comment>
<gene>
    <name type="primary">hba</name>
</gene>
<reference key="1">
    <citation type="journal article" date="1972" name="J. Biol. Chem.">
        <title>Multiple hemoglobins of catostomid fish. II. The amino acid sequence of the major alpha chain from Catostomus clarkii hemoglobins.</title>
        <authorList>
            <person name="Powers D.A."/>
            <person name="Edmundson A.B."/>
        </authorList>
    </citation>
    <scope>PROTEIN SEQUENCE</scope>
    <scope>ACETYLATION AT SER-1</scope>
</reference>
<reference key="2">
    <citation type="journal article" date="1972" name="J. Biol. Chem.">
        <title>Multiple hemoglobins of catostomid fish. I. Isolation and characterization of the isohemoglobins from Catostomus clarkii.</title>
        <authorList>
            <person name="Powers D.A."/>
            <person name="Edmundson A.B."/>
        </authorList>
    </citation>
    <scope>SUBUNIT</scope>
</reference>